<sequence>MKITKITTYRLPPRWMFLKIETDEGVVGWGEPVIEGRARTVEAAVHELGDYLIGQDPSRINDLWQVMYRAGFYRGGPILMSAIAGIDQALWDIKGKVLNAPVWQLMGGLVRDKIKAYSWVGGDRPADVIGGIKTLREIGFDTFKLNGCEELGLIDNSRAVDAAVNTVAQIREAFGNQIEFGLDFHGRVSAPMAKVLIKELEPYRPLFIEEPVLAEQAEYYPKLAAQTHIPLAAGERMFSRFDFKRVLEAGGISILQPDLSHAGGITECYKIAGMAEAYDVTLAPHCPLGPIALAACLHIDFVSYNAVLQEQSMGIHYNKGAELLDFVKNKEDFSMVGGFFKPLTKPGLGVEIDEAKVIEFSKNAPDWRNPLWRHEDNSVAEW</sequence>
<dbReference type="EC" id="4.2.1.6" evidence="2"/>
<dbReference type="EMBL" id="CP000802">
    <property type="protein sequence ID" value="ABV08106.1"/>
    <property type="molecule type" value="Genomic_DNA"/>
</dbReference>
<dbReference type="RefSeq" id="WP_000705004.1">
    <property type="nucleotide sequence ID" value="NC_009800.1"/>
</dbReference>
<dbReference type="SMR" id="A8A6F2"/>
<dbReference type="KEGG" id="ecx:EcHS_A3904"/>
<dbReference type="HOGENOM" id="CLU_030273_3_2_6"/>
<dbReference type="UniPathway" id="UPA00081">
    <property type="reaction ID" value="UER00518"/>
</dbReference>
<dbReference type="GO" id="GO:0008869">
    <property type="term" value="F:galactonate dehydratase activity"/>
    <property type="evidence" value="ECO:0007669"/>
    <property type="project" value="UniProtKB-UniRule"/>
</dbReference>
<dbReference type="GO" id="GO:0000287">
    <property type="term" value="F:magnesium ion binding"/>
    <property type="evidence" value="ECO:0007669"/>
    <property type="project" value="UniProtKB-UniRule"/>
</dbReference>
<dbReference type="GO" id="GO:0009063">
    <property type="term" value="P:amino acid catabolic process"/>
    <property type="evidence" value="ECO:0007669"/>
    <property type="project" value="InterPro"/>
</dbReference>
<dbReference type="GO" id="GO:0034194">
    <property type="term" value="P:D-galactonate catabolic process"/>
    <property type="evidence" value="ECO:0007669"/>
    <property type="project" value="UniProtKB-UniRule"/>
</dbReference>
<dbReference type="CDD" id="cd03325">
    <property type="entry name" value="D-galactonate_dehydratase"/>
    <property type="match status" value="1"/>
</dbReference>
<dbReference type="FunFam" id="3.20.20.120:FF:000008">
    <property type="entry name" value="D-galactonate dehydratase"/>
    <property type="match status" value="1"/>
</dbReference>
<dbReference type="FunFam" id="3.30.390.10:FF:000003">
    <property type="entry name" value="D-galactonate dehydratase"/>
    <property type="match status" value="1"/>
</dbReference>
<dbReference type="Gene3D" id="3.20.20.120">
    <property type="entry name" value="Enolase-like C-terminal domain"/>
    <property type="match status" value="1"/>
</dbReference>
<dbReference type="Gene3D" id="3.30.390.10">
    <property type="entry name" value="Enolase-like, N-terminal domain"/>
    <property type="match status" value="1"/>
</dbReference>
<dbReference type="HAMAP" id="MF_01289">
    <property type="entry name" value="Galacton_dehydrat"/>
    <property type="match status" value="1"/>
</dbReference>
<dbReference type="InterPro" id="IPR034593">
    <property type="entry name" value="DgoD-like"/>
</dbReference>
<dbReference type="InterPro" id="IPR036849">
    <property type="entry name" value="Enolase-like_C_sf"/>
</dbReference>
<dbReference type="InterPro" id="IPR029017">
    <property type="entry name" value="Enolase-like_N"/>
</dbReference>
<dbReference type="InterPro" id="IPR029065">
    <property type="entry name" value="Enolase_C-like"/>
</dbReference>
<dbReference type="InterPro" id="IPR023592">
    <property type="entry name" value="Galactonate_deHydtase"/>
</dbReference>
<dbReference type="InterPro" id="IPR018110">
    <property type="entry name" value="Mandel_Rmase/mucon_lact_enz_CS"/>
</dbReference>
<dbReference type="InterPro" id="IPR013342">
    <property type="entry name" value="Mandelate_racemase_C"/>
</dbReference>
<dbReference type="InterPro" id="IPR013341">
    <property type="entry name" value="Mandelate_racemase_N_dom"/>
</dbReference>
<dbReference type="NCBIfam" id="NF010624">
    <property type="entry name" value="PRK14017.1"/>
    <property type="match status" value="1"/>
</dbReference>
<dbReference type="PANTHER" id="PTHR48080:SF2">
    <property type="entry name" value="D-GALACTONATE DEHYDRATASE"/>
    <property type="match status" value="1"/>
</dbReference>
<dbReference type="PANTHER" id="PTHR48080">
    <property type="entry name" value="D-GALACTONATE DEHYDRATASE-RELATED"/>
    <property type="match status" value="1"/>
</dbReference>
<dbReference type="Pfam" id="PF13378">
    <property type="entry name" value="MR_MLE_C"/>
    <property type="match status" value="1"/>
</dbReference>
<dbReference type="Pfam" id="PF02746">
    <property type="entry name" value="MR_MLE_N"/>
    <property type="match status" value="1"/>
</dbReference>
<dbReference type="SFLD" id="SFLDF00003">
    <property type="entry name" value="D-galactonate_dehydratase"/>
    <property type="match status" value="1"/>
</dbReference>
<dbReference type="SFLD" id="SFLDG00179">
    <property type="entry name" value="mandelate_racemase"/>
    <property type="match status" value="1"/>
</dbReference>
<dbReference type="SMART" id="SM00922">
    <property type="entry name" value="MR_MLE"/>
    <property type="match status" value="1"/>
</dbReference>
<dbReference type="SUPFAM" id="SSF51604">
    <property type="entry name" value="Enolase C-terminal domain-like"/>
    <property type="match status" value="1"/>
</dbReference>
<dbReference type="SUPFAM" id="SSF54826">
    <property type="entry name" value="Enolase N-terminal domain-like"/>
    <property type="match status" value="1"/>
</dbReference>
<dbReference type="PROSITE" id="PS00908">
    <property type="entry name" value="MR_MLE_1"/>
    <property type="match status" value="1"/>
</dbReference>
<dbReference type="PROSITE" id="PS00909">
    <property type="entry name" value="MR_MLE_2"/>
    <property type="match status" value="1"/>
</dbReference>
<accession>A8A6F2</accession>
<evidence type="ECO:0000250" key="1"/>
<evidence type="ECO:0000255" key="2">
    <source>
        <dbReference type="HAMAP-Rule" id="MF_01289"/>
    </source>
</evidence>
<comment type="function">
    <text evidence="2">Catalyzes the dehydration of D-galactonate to 2-keto-3-deoxy-D-galactonate.</text>
</comment>
<comment type="catalytic activity">
    <reaction evidence="2">
        <text>D-galactonate = 2-dehydro-3-deoxy-D-galactonate + H2O</text>
        <dbReference type="Rhea" id="RHEA:18649"/>
        <dbReference type="ChEBI" id="CHEBI:12931"/>
        <dbReference type="ChEBI" id="CHEBI:15377"/>
        <dbReference type="ChEBI" id="CHEBI:57989"/>
        <dbReference type="EC" id="4.2.1.6"/>
    </reaction>
</comment>
<comment type="cofactor">
    <cofactor evidence="2">
        <name>Mg(2+)</name>
        <dbReference type="ChEBI" id="CHEBI:18420"/>
    </cofactor>
    <text evidence="2">Binds 1 Mg(2+) ion per subunit.</text>
</comment>
<comment type="pathway">
    <text evidence="2">Carbohydrate acid metabolism; D-galactonate degradation; D-glyceraldehyde 3-phosphate and pyruvate from D-galactonate: step 1/3.</text>
</comment>
<comment type="miscellaneous">
    <text evidence="2">Reaction proceeds via an anti dehydration.</text>
</comment>
<comment type="similarity">
    <text evidence="2">Belongs to the mandelate racemase/muconate lactonizing enzyme family. GalD subfamily.</text>
</comment>
<name>DGOD_ECOHS</name>
<feature type="chain" id="PRO_0000352630" description="D-galactonate dehydratase">
    <location>
        <begin position="1"/>
        <end position="382"/>
    </location>
</feature>
<feature type="active site" description="Proton donor" evidence="1">
    <location>
        <position position="185"/>
    </location>
</feature>
<feature type="active site" description="Proton acceptor" evidence="1">
    <location>
        <position position="285"/>
    </location>
</feature>
<feature type="binding site" evidence="2">
    <location>
        <position position="183"/>
    </location>
    <ligand>
        <name>Mg(2+)</name>
        <dbReference type="ChEBI" id="CHEBI:18420"/>
    </ligand>
</feature>
<feature type="binding site" evidence="2">
    <location>
        <position position="209"/>
    </location>
    <ligand>
        <name>Mg(2+)</name>
        <dbReference type="ChEBI" id="CHEBI:18420"/>
    </ligand>
</feature>
<feature type="binding site" evidence="2">
    <location>
        <position position="235"/>
    </location>
    <ligand>
        <name>Mg(2+)</name>
        <dbReference type="ChEBI" id="CHEBI:18420"/>
    </ligand>
</feature>
<feature type="site" description="Increases basicity of active site His" evidence="2">
    <location>
        <position position="258"/>
    </location>
</feature>
<feature type="site" description="Transition state stabilizer" evidence="2">
    <location>
        <position position="310"/>
    </location>
</feature>
<protein>
    <recommendedName>
        <fullName evidence="2">D-galactonate dehydratase</fullName>
        <shortName evidence="2">GalD</shortName>
        <ecNumber evidence="2">4.2.1.6</ecNumber>
    </recommendedName>
</protein>
<organism>
    <name type="scientific">Escherichia coli O9:H4 (strain HS)</name>
    <dbReference type="NCBI Taxonomy" id="331112"/>
    <lineage>
        <taxon>Bacteria</taxon>
        <taxon>Pseudomonadati</taxon>
        <taxon>Pseudomonadota</taxon>
        <taxon>Gammaproteobacteria</taxon>
        <taxon>Enterobacterales</taxon>
        <taxon>Enterobacteriaceae</taxon>
        <taxon>Escherichia</taxon>
    </lineage>
</organism>
<reference key="1">
    <citation type="journal article" date="2008" name="J. Bacteriol.">
        <title>The pangenome structure of Escherichia coli: comparative genomic analysis of E. coli commensal and pathogenic isolates.</title>
        <authorList>
            <person name="Rasko D.A."/>
            <person name="Rosovitz M.J."/>
            <person name="Myers G.S.A."/>
            <person name="Mongodin E.F."/>
            <person name="Fricke W.F."/>
            <person name="Gajer P."/>
            <person name="Crabtree J."/>
            <person name="Sebaihia M."/>
            <person name="Thomson N.R."/>
            <person name="Chaudhuri R."/>
            <person name="Henderson I.R."/>
            <person name="Sperandio V."/>
            <person name="Ravel J."/>
        </authorList>
    </citation>
    <scope>NUCLEOTIDE SEQUENCE [LARGE SCALE GENOMIC DNA]</scope>
    <source>
        <strain>HS</strain>
    </source>
</reference>
<gene>
    <name evidence="2" type="primary">dgoD</name>
    <name type="ordered locus">EcHS_A3904</name>
</gene>
<keyword id="KW-0456">Lyase</keyword>
<keyword id="KW-0460">Magnesium</keyword>
<keyword id="KW-0479">Metal-binding</keyword>
<proteinExistence type="inferred from homology"/>